<reference key="1">
    <citation type="journal article" date="2005" name="Proc. Natl. Acad. Sci. U.S.A.">
        <title>Complete genome sequence of Vibrio fischeri: a symbiotic bacterium with pathogenic congeners.</title>
        <authorList>
            <person name="Ruby E.G."/>
            <person name="Urbanowski M."/>
            <person name="Campbell J."/>
            <person name="Dunn A."/>
            <person name="Faini M."/>
            <person name="Gunsalus R."/>
            <person name="Lostroh P."/>
            <person name="Lupp C."/>
            <person name="McCann J."/>
            <person name="Millikan D."/>
            <person name="Schaefer A."/>
            <person name="Stabb E."/>
            <person name="Stevens A."/>
            <person name="Visick K."/>
            <person name="Whistler C."/>
            <person name="Greenberg E.P."/>
        </authorList>
    </citation>
    <scope>NUCLEOTIDE SEQUENCE [LARGE SCALE GENOMIC DNA]</scope>
    <source>
        <strain>ATCC 700601 / ES114</strain>
    </source>
</reference>
<organism>
    <name type="scientific">Aliivibrio fischeri (strain ATCC 700601 / ES114)</name>
    <name type="common">Vibrio fischeri</name>
    <dbReference type="NCBI Taxonomy" id="312309"/>
    <lineage>
        <taxon>Bacteria</taxon>
        <taxon>Pseudomonadati</taxon>
        <taxon>Pseudomonadota</taxon>
        <taxon>Gammaproteobacteria</taxon>
        <taxon>Vibrionales</taxon>
        <taxon>Vibrionaceae</taxon>
        <taxon>Aliivibrio</taxon>
    </lineage>
</organism>
<comment type="function">
    <text evidence="1">Part of the ABC transporter complex PstSACB involved in phosphate import. Responsible for energy coupling to the transport system.</text>
</comment>
<comment type="catalytic activity">
    <reaction evidence="1">
        <text>phosphate(out) + ATP + H2O = ADP + 2 phosphate(in) + H(+)</text>
        <dbReference type="Rhea" id="RHEA:24440"/>
        <dbReference type="ChEBI" id="CHEBI:15377"/>
        <dbReference type="ChEBI" id="CHEBI:15378"/>
        <dbReference type="ChEBI" id="CHEBI:30616"/>
        <dbReference type="ChEBI" id="CHEBI:43474"/>
        <dbReference type="ChEBI" id="CHEBI:456216"/>
        <dbReference type="EC" id="7.3.2.1"/>
    </reaction>
</comment>
<comment type="subunit">
    <text evidence="1">The complex is composed of two ATP-binding proteins (PstB), two transmembrane proteins (PstC and PstA) and a solute-binding protein (PstS).</text>
</comment>
<comment type="subcellular location">
    <subcellularLocation>
        <location evidence="1">Cell inner membrane</location>
        <topology evidence="1">Peripheral membrane protein</topology>
    </subcellularLocation>
</comment>
<comment type="similarity">
    <text evidence="1">Belongs to the ABC transporter superfamily. Phosphate importer (TC 3.A.1.7) family.</text>
</comment>
<sequence length="272" mass="30390">MYSLSPDLSFLSPMDVNHLSDENTAIEINNLCLNYGKTSALSNIEMRIPKGQVTAFIGPSGCGKSTLLRCINRMNDLVDNCKIKGSIKLFGDDIYHPDTDIPSLRRRVGMVFQRPNPFPKSIYENVVYGLRLQGIKEARVLDEAVEEALKAAALWDEVKHRLHENAFGLSGGQQQRLVIARAIAIEPEVLLLDEPTSALDPISTLTIEELIYELKSKYTVVIVTHNMQQAARVSDYTAFINQGKLVEYGNANTIFTSPIHKQTEDYITGRYG</sequence>
<protein>
    <recommendedName>
        <fullName evidence="1">Phosphate import ATP-binding protein PstB 2</fullName>
        <ecNumber evidence="1">7.3.2.1</ecNumber>
    </recommendedName>
    <alternativeName>
        <fullName evidence="1">ABC phosphate transporter 2</fullName>
    </alternativeName>
    <alternativeName>
        <fullName evidence="1">Phosphate-transporting ATPase 2</fullName>
    </alternativeName>
</protein>
<proteinExistence type="inferred from homology"/>
<gene>
    <name evidence="1" type="primary">pstB2</name>
    <name type="ordered locus">VF_1983</name>
</gene>
<keyword id="KW-0067">ATP-binding</keyword>
<keyword id="KW-0997">Cell inner membrane</keyword>
<keyword id="KW-1003">Cell membrane</keyword>
<keyword id="KW-0472">Membrane</keyword>
<keyword id="KW-0547">Nucleotide-binding</keyword>
<keyword id="KW-0592">Phosphate transport</keyword>
<keyword id="KW-1185">Reference proteome</keyword>
<keyword id="KW-1278">Translocase</keyword>
<keyword id="KW-0813">Transport</keyword>
<evidence type="ECO:0000255" key="1">
    <source>
        <dbReference type="HAMAP-Rule" id="MF_01702"/>
    </source>
</evidence>
<accession>Q5E3B8</accession>
<feature type="chain" id="PRO_0000272572" description="Phosphate import ATP-binding protein PstB 2">
    <location>
        <begin position="1"/>
        <end position="272"/>
    </location>
</feature>
<feature type="domain" description="ABC transporter" evidence="1">
    <location>
        <begin position="26"/>
        <end position="267"/>
    </location>
</feature>
<feature type="binding site" evidence="1">
    <location>
        <begin position="58"/>
        <end position="65"/>
    </location>
    <ligand>
        <name>ATP</name>
        <dbReference type="ChEBI" id="CHEBI:30616"/>
    </ligand>
</feature>
<dbReference type="EC" id="7.3.2.1" evidence="1"/>
<dbReference type="EMBL" id="CP000020">
    <property type="protein sequence ID" value="AAW86478.1"/>
    <property type="molecule type" value="Genomic_DNA"/>
</dbReference>
<dbReference type="RefSeq" id="YP_205366.1">
    <property type="nucleotide sequence ID" value="NC_006840.2"/>
</dbReference>
<dbReference type="SMR" id="Q5E3B8"/>
<dbReference type="STRING" id="312309.VF_1983"/>
<dbReference type="EnsemblBacteria" id="AAW86478">
    <property type="protein sequence ID" value="AAW86478"/>
    <property type="gene ID" value="VF_1983"/>
</dbReference>
<dbReference type="GeneID" id="54164679"/>
<dbReference type="KEGG" id="vfi:VF_1983"/>
<dbReference type="PATRIC" id="fig|312309.11.peg.2010"/>
<dbReference type="eggNOG" id="COG1117">
    <property type="taxonomic scope" value="Bacteria"/>
</dbReference>
<dbReference type="HOGENOM" id="CLU_000604_1_22_6"/>
<dbReference type="OrthoDB" id="9802264at2"/>
<dbReference type="Proteomes" id="UP000000537">
    <property type="component" value="Chromosome I"/>
</dbReference>
<dbReference type="GO" id="GO:0005886">
    <property type="term" value="C:plasma membrane"/>
    <property type="evidence" value="ECO:0007669"/>
    <property type="project" value="UniProtKB-SubCell"/>
</dbReference>
<dbReference type="GO" id="GO:0005524">
    <property type="term" value="F:ATP binding"/>
    <property type="evidence" value="ECO:0007669"/>
    <property type="project" value="UniProtKB-KW"/>
</dbReference>
<dbReference type="GO" id="GO:0016887">
    <property type="term" value="F:ATP hydrolysis activity"/>
    <property type="evidence" value="ECO:0007669"/>
    <property type="project" value="InterPro"/>
</dbReference>
<dbReference type="GO" id="GO:0015415">
    <property type="term" value="F:ATPase-coupled phosphate ion transmembrane transporter activity"/>
    <property type="evidence" value="ECO:0007669"/>
    <property type="project" value="UniProtKB-EC"/>
</dbReference>
<dbReference type="GO" id="GO:0035435">
    <property type="term" value="P:phosphate ion transmembrane transport"/>
    <property type="evidence" value="ECO:0007669"/>
    <property type="project" value="InterPro"/>
</dbReference>
<dbReference type="CDD" id="cd03260">
    <property type="entry name" value="ABC_PstB_phosphate_transporter"/>
    <property type="match status" value="1"/>
</dbReference>
<dbReference type="FunFam" id="3.40.50.300:FF:000132">
    <property type="entry name" value="Phosphate import ATP-binding protein PstB"/>
    <property type="match status" value="1"/>
</dbReference>
<dbReference type="Gene3D" id="3.40.50.300">
    <property type="entry name" value="P-loop containing nucleotide triphosphate hydrolases"/>
    <property type="match status" value="1"/>
</dbReference>
<dbReference type="InterPro" id="IPR003593">
    <property type="entry name" value="AAA+_ATPase"/>
</dbReference>
<dbReference type="InterPro" id="IPR003439">
    <property type="entry name" value="ABC_transporter-like_ATP-bd"/>
</dbReference>
<dbReference type="InterPro" id="IPR017871">
    <property type="entry name" value="ABC_transporter-like_CS"/>
</dbReference>
<dbReference type="InterPro" id="IPR027417">
    <property type="entry name" value="P-loop_NTPase"/>
</dbReference>
<dbReference type="InterPro" id="IPR005670">
    <property type="entry name" value="PstB-like"/>
</dbReference>
<dbReference type="NCBIfam" id="TIGR00972">
    <property type="entry name" value="3a0107s01c2"/>
    <property type="match status" value="1"/>
</dbReference>
<dbReference type="PANTHER" id="PTHR43423">
    <property type="entry name" value="ABC TRANSPORTER I FAMILY MEMBER 17"/>
    <property type="match status" value="1"/>
</dbReference>
<dbReference type="PANTHER" id="PTHR43423:SF12">
    <property type="entry name" value="IRON EXPORT ATP-BINDING PROTEIN FETA-RELATED"/>
    <property type="match status" value="1"/>
</dbReference>
<dbReference type="Pfam" id="PF00005">
    <property type="entry name" value="ABC_tran"/>
    <property type="match status" value="1"/>
</dbReference>
<dbReference type="SMART" id="SM00382">
    <property type="entry name" value="AAA"/>
    <property type="match status" value="1"/>
</dbReference>
<dbReference type="SUPFAM" id="SSF52540">
    <property type="entry name" value="P-loop containing nucleoside triphosphate hydrolases"/>
    <property type="match status" value="1"/>
</dbReference>
<dbReference type="PROSITE" id="PS00211">
    <property type="entry name" value="ABC_TRANSPORTER_1"/>
    <property type="match status" value="1"/>
</dbReference>
<dbReference type="PROSITE" id="PS50893">
    <property type="entry name" value="ABC_TRANSPORTER_2"/>
    <property type="match status" value="1"/>
</dbReference>
<dbReference type="PROSITE" id="PS51238">
    <property type="entry name" value="PSTB"/>
    <property type="match status" value="1"/>
</dbReference>
<name>PSTB2_ALIF1</name>